<name>RS21_SHESM</name>
<keyword id="KW-0687">Ribonucleoprotein</keyword>
<keyword id="KW-0689">Ribosomal protein</keyword>
<sequence length="71" mass="8345">MPIIKVRENEPFDVALRRFKRSCEKAGILADVRAREFYEKPTTARKRAKAAAVKRLAKKLSRENARRVRLY</sequence>
<reference key="1">
    <citation type="submission" date="2006-08" db="EMBL/GenBank/DDBJ databases">
        <title>Complete sequence of Shewanella sp. MR-4.</title>
        <authorList>
            <consortium name="US DOE Joint Genome Institute"/>
            <person name="Copeland A."/>
            <person name="Lucas S."/>
            <person name="Lapidus A."/>
            <person name="Barry K."/>
            <person name="Detter J.C."/>
            <person name="Glavina del Rio T."/>
            <person name="Hammon N."/>
            <person name="Israni S."/>
            <person name="Dalin E."/>
            <person name="Tice H."/>
            <person name="Pitluck S."/>
            <person name="Kiss H."/>
            <person name="Brettin T."/>
            <person name="Bruce D."/>
            <person name="Han C."/>
            <person name="Tapia R."/>
            <person name="Gilna P."/>
            <person name="Schmutz J."/>
            <person name="Larimer F."/>
            <person name="Land M."/>
            <person name="Hauser L."/>
            <person name="Kyrpides N."/>
            <person name="Mikhailova N."/>
            <person name="Nealson K."/>
            <person name="Konstantinidis K."/>
            <person name="Klappenbach J."/>
            <person name="Tiedje J."/>
            <person name="Richardson P."/>
        </authorList>
    </citation>
    <scope>NUCLEOTIDE SEQUENCE [LARGE SCALE GENOMIC DNA]</scope>
    <source>
        <strain>MR-4</strain>
    </source>
</reference>
<accession>Q0HG41</accession>
<proteinExistence type="inferred from homology"/>
<dbReference type="EMBL" id="CP000446">
    <property type="protein sequence ID" value="ABI39976.1"/>
    <property type="molecule type" value="Genomic_DNA"/>
</dbReference>
<dbReference type="RefSeq" id="WP_006080725.1">
    <property type="nucleotide sequence ID" value="NC_008321.1"/>
</dbReference>
<dbReference type="SMR" id="Q0HG41"/>
<dbReference type="GeneID" id="94729004"/>
<dbReference type="KEGG" id="she:Shewmr4_2905"/>
<dbReference type="HOGENOM" id="CLU_159258_1_0_6"/>
<dbReference type="GO" id="GO:1990904">
    <property type="term" value="C:ribonucleoprotein complex"/>
    <property type="evidence" value="ECO:0007669"/>
    <property type="project" value="UniProtKB-KW"/>
</dbReference>
<dbReference type="GO" id="GO:0005840">
    <property type="term" value="C:ribosome"/>
    <property type="evidence" value="ECO:0007669"/>
    <property type="project" value="UniProtKB-KW"/>
</dbReference>
<dbReference type="GO" id="GO:0003735">
    <property type="term" value="F:structural constituent of ribosome"/>
    <property type="evidence" value="ECO:0007669"/>
    <property type="project" value="InterPro"/>
</dbReference>
<dbReference type="GO" id="GO:0006412">
    <property type="term" value="P:translation"/>
    <property type="evidence" value="ECO:0007669"/>
    <property type="project" value="UniProtKB-UniRule"/>
</dbReference>
<dbReference type="Gene3D" id="1.20.5.1150">
    <property type="entry name" value="Ribosomal protein S8"/>
    <property type="match status" value="1"/>
</dbReference>
<dbReference type="HAMAP" id="MF_00358">
    <property type="entry name" value="Ribosomal_bS21"/>
    <property type="match status" value="1"/>
</dbReference>
<dbReference type="InterPro" id="IPR001911">
    <property type="entry name" value="Ribosomal_bS21"/>
</dbReference>
<dbReference type="InterPro" id="IPR018278">
    <property type="entry name" value="Ribosomal_bS21_CS"/>
</dbReference>
<dbReference type="InterPro" id="IPR038380">
    <property type="entry name" value="Ribosomal_bS21_sf"/>
</dbReference>
<dbReference type="NCBIfam" id="TIGR00030">
    <property type="entry name" value="S21p"/>
    <property type="match status" value="1"/>
</dbReference>
<dbReference type="PANTHER" id="PTHR21109">
    <property type="entry name" value="MITOCHONDRIAL 28S RIBOSOMAL PROTEIN S21"/>
    <property type="match status" value="1"/>
</dbReference>
<dbReference type="PANTHER" id="PTHR21109:SF22">
    <property type="entry name" value="SMALL RIBOSOMAL SUBUNIT PROTEIN BS21"/>
    <property type="match status" value="1"/>
</dbReference>
<dbReference type="Pfam" id="PF01165">
    <property type="entry name" value="Ribosomal_S21"/>
    <property type="match status" value="1"/>
</dbReference>
<dbReference type="PRINTS" id="PR00976">
    <property type="entry name" value="RIBOSOMALS21"/>
</dbReference>
<dbReference type="PROSITE" id="PS01181">
    <property type="entry name" value="RIBOSOMAL_S21"/>
    <property type="match status" value="1"/>
</dbReference>
<comment type="similarity">
    <text evidence="1">Belongs to the bacterial ribosomal protein bS21 family.</text>
</comment>
<organism>
    <name type="scientific">Shewanella sp. (strain MR-4)</name>
    <dbReference type="NCBI Taxonomy" id="60480"/>
    <lineage>
        <taxon>Bacteria</taxon>
        <taxon>Pseudomonadati</taxon>
        <taxon>Pseudomonadota</taxon>
        <taxon>Gammaproteobacteria</taxon>
        <taxon>Alteromonadales</taxon>
        <taxon>Shewanellaceae</taxon>
        <taxon>Shewanella</taxon>
    </lineage>
</organism>
<evidence type="ECO:0000255" key="1">
    <source>
        <dbReference type="HAMAP-Rule" id="MF_00358"/>
    </source>
</evidence>
<evidence type="ECO:0000305" key="2"/>
<gene>
    <name evidence="1" type="primary">rpsU</name>
    <name type="ordered locus">Shewmr4_2905</name>
</gene>
<feature type="chain" id="PRO_0000266762" description="Small ribosomal subunit protein bS21">
    <location>
        <begin position="1"/>
        <end position="71"/>
    </location>
</feature>
<protein>
    <recommendedName>
        <fullName evidence="1">Small ribosomal subunit protein bS21</fullName>
    </recommendedName>
    <alternativeName>
        <fullName evidence="2">30S ribosomal protein S21</fullName>
    </alternativeName>
</protein>